<protein>
    <recommendedName>
        <fullName>Leucine aminopeptidase 1</fullName>
        <ecNumber>3.4.11.-</ecNumber>
    </recommendedName>
    <alternativeName>
        <fullName>Leucyl aminopeptidase 1</fullName>
        <shortName>LAP1</shortName>
    </alternativeName>
</protein>
<keyword id="KW-0031">Aminopeptidase</keyword>
<keyword id="KW-1015">Disulfide bond</keyword>
<keyword id="KW-0325">Glycoprotein</keyword>
<keyword id="KW-0378">Hydrolase</keyword>
<keyword id="KW-0479">Metal-binding</keyword>
<keyword id="KW-0645">Protease</keyword>
<keyword id="KW-1185">Reference proteome</keyword>
<keyword id="KW-0964">Secreted</keyword>
<keyword id="KW-0732">Signal</keyword>
<keyword id="KW-0862">Zinc</keyword>
<keyword id="KW-0865">Zymogen</keyword>
<gene>
    <name type="primary">lap1</name>
    <name type="ORF">An14g00620</name>
</gene>
<name>LAP1_ASPNC</name>
<proteinExistence type="inferred from homology"/>
<feature type="signal peptide" evidence="2">
    <location>
        <begin position="1"/>
        <end position="19"/>
    </location>
</feature>
<feature type="propeptide" id="PRO_0000412392" evidence="1">
    <location>
        <begin position="20"/>
        <end position="91"/>
    </location>
</feature>
<feature type="chain" id="PRO_5000220887" description="Leucine aminopeptidase 1">
    <location>
        <begin position="92"/>
        <end position="391"/>
    </location>
</feature>
<feature type="binding site" evidence="1">
    <location>
        <position position="191"/>
    </location>
    <ligand>
        <name>Zn(2+)</name>
        <dbReference type="ChEBI" id="CHEBI:29105"/>
        <label>1</label>
    </ligand>
</feature>
<feature type="binding site" evidence="1">
    <location>
        <position position="210"/>
    </location>
    <ligand>
        <name>Zn(2+)</name>
        <dbReference type="ChEBI" id="CHEBI:29105"/>
        <label>1</label>
    </ligand>
</feature>
<feature type="binding site" evidence="1">
    <location>
        <position position="210"/>
    </location>
    <ligand>
        <name>Zn(2+)</name>
        <dbReference type="ChEBI" id="CHEBI:29105"/>
        <label>2</label>
        <note>catalytic</note>
    </ligand>
</feature>
<feature type="binding site" evidence="1">
    <location>
        <position position="249"/>
    </location>
    <ligand>
        <name>Zn(2+)</name>
        <dbReference type="ChEBI" id="CHEBI:29105"/>
        <label>2</label>
        <note>catalytic</note>
    </ligand>
</feature>
<feature type="binding site" evidence="1">
    <location>
        <position position="276"/>
    </location>
    <ligand>
        <name>Zn(2+)</name>
        <dbReference type="ChEBI" id="CHEBI:29105"/>
        <label>1</label>
    </ligand>
</feature>
<feature type="binding site" evidence="1">
    <location>
        <position position="358"/>
    </location>
    <ligand>
        <name>Zn(2+)</name>
        <dbReference type="ChEBI" id="CHEBI:29105"/>
        <label>2</label>
        <note>catalytic</note>
    </ligand>
</feature>
<feature type="glycosylation site" description="N-linked (GlcNAc...) asparagine" evidence="2">
    <location>
        <position position="183"/>
    </location>
</feature>
<feature type="glycosylation site" description="N-linked (GlcNAc...) asparagine" evidence="2">
    <location>
        <position position="235"/>
    </location>
</feature>
<feature type="disulfide bond" evidence="1">
    <location>
        <begin position="325"/>
        <end position="329"/>
    </location>
</feature>
<dbReference type="EC" id="3.4.11.-"/>
<dbReference type="EMBL" id="AM270310">
    <property type="protein sequence ID" value="CAK41861.1"/>
    <property type="molecule type" value="Genomic_DNA"/>
</dbReference>
<dbReference type="RefSeq" id="XP_001400691.1">
    <property type="nucleotide sequence ID" value="XM_001400654.2"/>
</dbReference>
<dbReference type="SMR" id="A2R2G1"/>
<dbReference type="MEROPS" id="M28.022"/>
<dbReference type="GlyCosmos" id="A2R2G1">
    <property type="glycosylation" value="2 sites, No reported glycans"/>
</dbReference>
<dbReference type="EnsemblFungi" id="CAK41861">
    <property type="protein sequence ID" value="CAK41861"/>
    <property type="gene ID" value="An14g00620"/>
</dbReference>
<dbReference type="GeneID" id="4986916"/>
<dbReference type="KEGG" id="ang:An14g00620"/>
<dbReference type="VEuPathDB" id="FungiDB:An14g00620"/>
<dbReference type="HOGENOM" id="CLU_025866_0_0_1"/>
<dbReference type="Proteomes" id="UP000006706">
    <property type="component" value="Chromosome 1R"/>
</dbReference>
<dbReference type="GO" id="GO:0005576">
    <property type="term" value="C:extracellular region"/>
    <property type="evidence" value="ECO:0007669"/>
    <property type="project" value="UniProtKB-SubCell"/>
</dbReference>
<dbReference type="GO" id="GO:0004177">
    <property type="term" value="F:aminopeptidase activity"/>
    <property type="evidence" value="ECO:0007669"/>
    <property type="project" value="UniProtKB-KW"/>
</dbReference>
<dbReference type="GO" id="GO:0046872">
    <property type="term" value="F:metal ion binding"/>
    <property type="evidence" value="ECO:0007669"/>
    <property type="project" value="UniProtKB-KW"/>
</dbReference>
<dbReference type="GO" id="GO:0008235">
    <property type="term" value="F:metalloexopeptidase activity"/>
    <property type="evidence" value="ECO:0007669"/>
    <property type="project" value="InterPro"/>
</dbReference>
<dbReference type="GO" id="GO:0006508">
    <property type="term" value="P:proteolysis"/>
    <property type="evidence" value="ECO:0007669"/>
    <property type="project" value="UniProtKB-KW"/>
</dbReference>
<dbReference type="CDD" id="cd03879">
    <property type="entry name" value="M28_AAP"/>
    <property type="match status" value="1"/>
</dbReference>
<dbReference type="FunFam" id="3.40.630.10:FF:000042">
    <property type="entry name" value="Peptide hydrolase"/>
    <property type="match status" value="1"/>
</dbReference>
<dbReference type="Gene3D" id="3.40.630.10">
    <property type="entry name" value="Zn peptidases"/>
    <property type="match status" value="1"/>
</dbReference>
<dbReference type="InterPro" id="IPR045175">
    <property type="entry name" value="M28_fam"/>
</dbReference>
<dbReference type="InterPro" id="IPR007484">
    <property type="entry name" value="Peptidase_M28"/>
</dbReference>
<dbReference type="PANTHER" id="PTHR12147:SF56">
    <property type="entry name" value="AMINOPEPTIDASE YDR415C-RELATED"/>
    <property type="match status" value="1"/>
</dbReference>
<dbReference type="PANTHER" id="PTHR12147">
    <property type="entry name" value="METALLOPEPTIDASE M28 FAMILY MEMBER"/>
    <property type="match status" value="1"/>
</dbReference>
<dbReference type="Pfam" id="PF04389">
    <property type="entry name" value="Peptidase_M28"/>
    <property type="match status" value="1"/>
</dbReference>
<dbReference type="SUPFAM" id="SSF53187">
    <property type="entry name" value="Zn-dependent exopeptidases"/>
    <property type="match status" value="1"/>
</dbReference>
<organism>
    <name type="scientific">Aspergillus niger (strain ATCC MYA-4892 / CBS 513.88 / FGSC A1513)</name>
    <dbReference type="NCBI Taxonomy" id="425011"/>
    <lineage>
        <taxon>Eukaryota</taxon>
        <taxon>Fungi</taxon>
        <taxon>Dikarya</taxon>
        <taxon>Ascomycota</taxon>
        <taxon>Pezizomycotina</taxon>
        <taxon>Eurotiomycetes</taxon>
        <taxon>Eurotiomycetidae</taxon>
        <taxon>Eurotiales</taxon>
        <taxon>Aspergillaceae</taxon>
        <taxon>Aspergillus</taxon>
        <taxon>Aspergillus subgen. Circumdati</taxon>
    </lineage>
</organism>
<reference key="1">
    <citation type="journal article" date="2007" name="Nat. Biotechnol.">
        <title>Genome sequencing and analysis of the versatile cell factory Aspergillus niger CBS 513.88.</title>
        <authorList>
            <person name="Pel H.J."/>
            <person name="de Winde J.H."/>
            <person name="Archer D.B."/>
            <person name="Dyer P.S."/>
            <person name="Hofmann G."/>
            <person name="Schaap P.J."/>
            <person name="Turner G."/>
            <person name="de Vries R.P."/>
            <person name="Albang R."/>
            <person name="Albermann K."/>
            <person name="Andersen M.R."/>
            <person name="Bendtsen J.D."/>
            <person name="Benen J.A.E."/>
            <person name="van den Berg M."/>
            <person name="Breestraat S."/>
            <person name="Caddick M.X."/>
            <person name="Contreras R."/>
            <person name="Cornell M."/>
            <person name="Coutinho P.M."/>
            <person name="Danchin E.G.J."/>
            <person name="Debets A.J.M."/>
            <person name="Dekker P."/>
            <person name="van Dijck P.W.M."/>
            <person name="van Dijk A."/>
            <person name="Dijkhuizen L."/>
            <person name="Driessen A.J.M."/>
            <person name="d'Enfert C."/>
            <person name="Geysens S."/>
            <person name="Goosen C."/>
            <person name="Groot G.S.P."/>
            <person name="de Groot P.W.J."/>
            <person name="Guillemette T."/>
            <person name="Henrissat B."/>
            <person name="Herweijer M."/>
            <person name="van den Hombergh J.P.T.W."/>
            <person name="van den Hondel C.A.M.J.J."/>
            <person name="van der Heijden R.T.J.M."/>
            <person name="van der Kaaij R.M."/>
            <person name="Klis F.M."/>
            <person name="Kools H.J."/>
            <person name="Kubicek C.P."/>
            <person name="van Kuyk P.A."/>
            <person name="Lauber J."/>
            <person name="Lu X."/>
            <person name="van der Maarel M.J.E.C."/>
            <person name="Meulenberg R."/>
            <person name="Menke H."/>
            <person name="Mortimer M.A."/>
            <person name="Nielsen J."/>
            <person name="Oliver S.G."/>
            <person name="Olsthoorn M."/>
            <person name="Pal K."/>
            <person name="van Peij N.N.M.E."/>
            <person name="Ram A.F.J."/>
            <person name="Rinas U."/>
            <person name="Roubos J.A."/>
            <person name="Sagt C.M.J."/>
            <person name="Schmoll M."/>
            <person name="Sun J."/>
            <person name="Ussery D."/>
            <person name="Varga J."/>
            <person name="Vervecken W."/>
            <person name="van de Vondervoort P.J.J."/>
            <person name="Wedler H."/>
            <person name="Woesten H.A.B."/>
            <person name="Zeng A.-P."/>
            <person name="van Ooyen A.J.J."/>
            <person name="Visser J."/>
            <person name="Stam H."/>
        </authorList>
    </citation>
    <scope>NUCLEOTIDE SEQUENCE [LARGE SCALE GENOMIC DNA]</scope>
    <source>
        <strain>ATCC MYA-4892 / CBS 513.88 / FGSC A1513</strain>
    </source>
</reference>
<evidence type="ECO:0000250" key="1"/>
<evidence type="ECO:0000255" key="2"/>
<evidence type="ECO:0000305" key="3"/>
<comment type="function">
    <text evidence="1">Extracellular aminopeptidase that allows assimilation of proteinaceous substrates.</text>
</comment>
<comment type="cofactor">
    <cofactor evidence="1">
        <name>Zn(2+)</name>
        <dbReference type="ChEBI" id="CHEBI:29105"/>
    </cofactor>
    <text evidence="1">Binds 2 Zn(2+) ions per subunit.</text>
</comment>
<comment type="subunit">
    <text evidence="1">Monomer.</text>
</comment>
<comment type="subcellular location">
    <subcellularLocation>
        <location evidence="1">Secreted</location>
    </subcellularLocation>
</comment>
<comment type="similarity">
    <text evidence="3">Belongs to the peptidase M28 family. M28E subfamily.</text>
</comment>
<sequence>MKLSIALALGATASTGVLAAVVPQQEPLITPQDPPTHHHQEKFLIELAPYQTRWVTEEEKWDLKLDGVNFIDITEERNTGFYPTLHAGSYVHYPPTMKHAEKVVPLLRGLSKDNMEQNLNKFTSFHTRYYRSSTGIESAKWLYSRVSDVIEQSGAAEYGATVEQFAHSWGQFSIIARIPGQTNKTVVLGAHQDSINLFLPSILAAPGADDDGSGTVTILEALRGLLQSDAIVRGNASNTIEFHWYSAEEGGMLGSQAIFSQYKRDKRDIKAMLQQDMTGYTQGALDAGRQEAIGIMVDYVDEGLTQFLKDVTTEYCGIGYIETRCGYACSDHTSASKYGYPAAMATESEMENSNKRIHTTDDSIRYLSFDHMLEHARLTLGFAYELAFAQF</sequence>
<accession>A2R2G1</accession>